<feature type="chain" id="PRO_0000185482" description="Phosphatidylinositol 4-phosphate 5-kinase 10">
    <location>
        <begin position="1"/>
        <end position="427"/>
    </location>
</feature>
<feature type="domain" description="PIPK" evidence="2">
    <location>
        <begin position="1"/>
        <end position="419"/>
    </location>
</feature>
<feature type="region of interest" description="Disordered" evidence="3">
    <location>
        <begin position="247"/>
        <end position="287"/>
    </location>
</feature>
<feature type="region of interest" description="Disordered" evidence="3">
    <location>
        <begin position="334"/>
        <end position="355"/>
    </location>
</feature>
<feature type="region of interest" description="Activation loop" evidence="1">
    <location>
        <begin position="379"/>
        <end position="400"/>
    </location>
</feature>
<evidence type="ECO:0000250" key="1"/>
<evidence type="ECO:0000255" key="2">
    <source>
        <dbReference type="PROSITE-ProRule" id="PRU00781"/>
    </source>
</evidence>
<evidence type="ECO:0000256" key="3">
    <source>
        <dbReference type="SAM" id="MobiDB-lite"/>
    </source>
</evidence>
<evidence type="ECO:0000305" key="4"/>
<organism>
    <name type="scientific">Arabidopsis thaliana</name>
    <name type="common">Mouse-ear cress</name>
    <dbReference type="NCBI Taxonomy" id="3702"/>
    <lineage>
        <taxon>Eukaryota</taxon>
        <taxon>Viridiplantae</taxon>
        <taxon>Streptophyta</taxon>
        <taxon>Embryophyta</taxon>
        <taxon>Tracheophyta</taxon>
        <taxon>Spermatophyta</taxon>
        <taxon>Magnoliopsida</taxon>
        <taxon>eudicotyledons</taxon>
        <taxon>Gunneridae</taxon>
        <taxon>Pentapetalae</taxon>
        <taxon>rosids</taxon>
        <taxon>malvids</taxon>
        <taxon>Brassicales</taxon>
        <taxon>Brassicaceae</taxon>
        <taxon>Camelineae</taxon>
        <taxon>Arabidopsis</taxon>
    </lineage>
</organism>
<sequence>MFTREITAKDVKATEKNRIRYSSKHIKHLPPGTITEFEWKDYCPLGFRLIQELEDINHDEYMKSICNDETLRKLSTSKVGNMFLLSKDDRFLIKILRKSEIKVILEMLPGYFRHIHKYRSTLLSKNYGAHSVKPIGGVKTYFVVMSNILQSDVFMNKVYDLKGSSQGRTNKKIKVRDKTILKDIDLDFCFYVDSLARHRLIKQTKLDCELLEDEGIMDYSLMLGLQVKGSCHGSIDELIPVYDSFTSRGSVDSNSSKFMKTASNSPDRSSSTMYSCTPSRNSVDSENSVNIQSVASISPSPAQTNASDSPYESLVSKTNLTNIFQNSSSTNFGMKIPGRARRVGRGESGSVVGKQSREGGEEWYDVILYLGIIDIFQDYGVRKRLEHCYKSIQHSSKTISAVHPKMYSSRFQDFVSQIFLPDEDPSH</sequence>
<dbReference type="EC" id="2.7.1.68"/>
<dbReference type="EMBL" id="Y12776">
    <property type="protein sequence ID" value="CAA73312.1"/>
    <property type="molecule type" value="Genomic_DNA"/>
</dbReference>
<dbReference type="EMBL" id="AC061957">
    <property type="protein sequence ID" value="AAF81306.1"/>
    <property type="status" value="ALT_SEQ"/>
    <property type="molecule type" value="Genomic_DNA"/>
</dbReference>
<dbReference type="EMBL" id="CP002684">
    <property type="protein sequence ID" value="AEE27290.1"/>
    <property type="molecule type" value="Genomic_DNA"/>
</dbReference>
<dbReference type="EMBL" id="DQ056443">
    <property type="protein sequence ID" value="AAY78600.1"/>
    <property type="molecule type" value="mRNA"/>
</dbReference>
<dbReference type="PIR" id="C86145">
    <property type="entry name" value="C86145"/>
</dbReference>
<dbReference type="RefSeq" id="NP_171653.2">
    <property type="nucleotide sequence ID" value="NM_100028.3"/>
</dbReference>
<dbReference type="SMR" id="Q9LMN1"/>
<dbReference type="FunCoup" id="Q9LMN1">
    <property type="interactions" value="245"/>
</dbReference>
<dbReference type="STRING" id="3702.Q9LMN1"/>
<dbReference type="PaxDb" id="3702-AT1G01460.1"/>
<dbReference type="ProteomicsDB" id="234755"/>
<dbReference type="EnsemblPlants" id="AT1G01460.1">
    <property type="protein sequence ID" value="AT1G01460.1"/>
    <property type="gene ID" value="AT1G01460"/>
</dbReference>
<dbReference type="GeneID" id="839469"/>
<dbReference type="Gramene" id="AT1G01460.1">
    <property type="protein sequence ID" value="AT1G01460.1"/>
    <property type="gene ID" value="AT1G01460"/>
</dbReference>
<dbReference type="KEGG" id="ath:AT1G01460"/>
<dbReference type="Araport" id="AT1G01460"/>
<dbReference type="TAIR" id="AT1G01460">
    <property type="gene designation" value="PIPK11"/>
</dbReference>
<dbReference type="eggNOG" id="KOG0229">
    <property type="taxonomic scope" value="Eukaryota"/>
</dbReference>
<dbReference type="HOGENOM" id="CLU_004312_6_3_1"/>
<dbReference type="InParanoid" id="Q9LMN1"/>
<dbReference type="OMA" id="DYSPMCY"/>
<dbReference type="PhylomeDB" id="Q9LMN1"/>
<dbReference type="BioCyc" id="ARA:AT1G01460-MONOMER"/>
<dbReference type="BRENDA" id="2.7.1.68">
    <property type="organism ID" value="399"/>
</dbReference>
<dbReference type="PRO" id="PR:Q9LMN1"/>
<dbReference type="Proteomes" id="UP000006548">
    <property type="component" value="Chromosome 1"/>
</dbReference>
<dbReference type="ExpressionAtlas" id="Q9LMN1">
    <property type="expression patterns" value="baseline and differential"/>
</dbReference>
<dbReference type="GO" id="GO:0016308">
    <property type="term" value="F:1-phosphatidylinositol-4-phosphate 5-kinase activity"/>
    <property type="evidence" value="ECO:0007669"/>
    <property type="project" value="UniProtKB-EC"/>
</dbReference>
<dbReference type="GO" id="GO:0005524">
    <property type="term" value="F:ATP binding"/>
    <property type="evidence" value="ECO:0007669"/>
    <property type="project" value="UniProtKB-KW"/>
</dbReference>
<dbReference type="GO" id="GO:0046488">
    <property type="term" value="P:phosphatidylinositol metabolic process"/>
    <property type="evidence" value="ECO:0007669"/>
    <property type="project" value="InterPro"/>
</dbReference>
<dbReference type="Gene3D" id="3.30.810.10">
    <property type="entry name" value="2-Layer Sandwich"/>
    <property type="match status" value="1"/>
</dbReference>
<dbReference type="Gene3D" id="3.30.800.10">
    <property type="entry name" value="Phosphatidylinositol Phosphate Kinase II Beta"/>
    <property type="match status" value="1"/>
</dbReference>
<dbReference type="InterPro" id="IPR027483">
    <property type="entry name" value="PInositol-4-P-4/5-kinase_C_sf"/>
</dbReference>
<dbReference type="InterPro" id="IPR002498">
    <property type="entry name" value="PInositol-4-P-4/5-kinase_core"/>
</dbReference>
<dbReference type="InterPro" id="IPR027484">
    <property type="entry name" value="PInositol-4-P-5-kinase_N"/>
</dbReference>
<dbReference type="InterPro" id="IPR023610">
    <property type="entry name" value="PInositol-4/5-P-5/4-kinase"/>
</dbReference>
<dbReference type="PANTHER" id="PTHR23086:SF111">
    <property type="entry name" value="PHOSPHATIDYLINOSITOL 4-PHOSPHATE 5-KINASE 10"/>
    <property type="match status" value="1"/>
</dbReference>
<dbReference type="PANTHER" id="PTHR23086">
    <property type="entry name" value="PHOSPHATIDYLINOSITOL-4-PHOSPHATE 5-KINASE"/>
    <property type="match status" value="1"/>
</dbReference>
<dbReference type="Pfam" id="PF01504">
    <property type="entry name" value="PIP5K"/>
    <property type="match status" value="1"/>
</dbReference>
<dbReference type="SMART" id="SM00330">
    <property type="entry name" value="PIPKc"/>
    <property type="match status" value="1"/>
</dbReference>
<dbReference type="SUPFAM" id="SSF56104">
    <property type="entry name" value="SAICAR synthase-like"/>
    <property type="match status" value="1"/>
</dbReference>
<dbReference type="PROSITE" id="PS51455">
    <property type="entry name" value="PIPK"/>
    <property type="match status" value="1"/>
</dbReference>
<keyword id="KW-0067">ATP-binding</keyword>
<keyword id="KW-0418">Kinase</keyword>
<keyword id="KW-0547">Nucleotide-binding</keyword>
<keyword id="KW-1185">Reference proteome</keyword>
<keyword id="KW-0808">Transferase</keyword>
<name>PI5KA_ARATH</name>
<reference key="1">
    <citation type="journal article" date="1998" name="Gene">
        <title>Sequence analysis of a 40-kb Arabidopsis thaliana genomic region located at the top of chromosome 1.</title>
        <authorList>
            <person name="Terryn N."/>
            <person name="Gielen J."/>
            <person name="De Keyser A."/>
            <person name="Van Den Daele H."/>
            <person name="Ardiles W."/>
            <person name="Neyt P."/>
            <person name="De Clercq R."/>
            <person name="Coppieters J."/>
            <person name="Dehais P."/>
            <person name="Villarroel R."/>
            <person name="Rouze P."/>
            <person name="van Montagu M."/>
        </authorList>
    </citation>
    <scope>NUCLEOTIDE SEQUENCE [GENOMIC DNA]</scope>
</reference>
<reference key="2">
    <citation type="journal article" date="2000" name="Nature">
        <title>Sequence and analysis of chromosome 1 of the plant Arabidopsis thaliana.</title>
        <authorList>
            <person name="Theologis A."/>
            <person name="Ecker J.R."/>
            <person name="Palm C.J."/>
            <person name="Federspiel N.A."/>
            <person name="Kaul S."/>
            <person name="White O."/>
            <person name="Alonso J."/>
            <person name="Altafi H."/>
            <person name="Araujo R."/>
            <person name="Bowman C.L."/>
            <person name="Brooks S.Y."/>
            <person name="Buehler E."/>
            <person name="Chan A."/>
            <person name="Chao Q."/>
            <person name="Chen H."/>
            <person name="Cheuk R.F."/>
            <person name="Chin C.W."/>
            <person name="Chung M.K."/>
            <person name="Conn L."/>
            <person name="Conway A.B."/>
            <person name="Conway A.R."/>
            <person name="Creasy T.H."/>
            <person name="Dewar K."/>
            <person name="Dunn P."/>
            <person name="Etgu P."/>
            <person name="Feldblyum T.V."/>
            <person name="Feng J.-D."/>
            <person name="Fong B."/>
            <person name="Fujii C.Y."/>
            <person name="Gill J.E."/>
            <person name="Goldsmith A.D."/>
            <person name="Haas B."/>
            <person name="Hansen N.F."/>
            <person name="Hughes B."/>
            <person name="Huizar L."/>
            <person name="Hunter J.L."/>
            <person name="Jenkins J."/>
            <person name="Johnson-Hopson C."/>
            <person name="Khan S."/>
            <person name="Khaykin E."/>
            <person name="Kim C.J."/>
            <person name="Koo H.L."/>
            <person name="Kremenetskaia I."/>
            <person name="Kurtz D.B."/>
            <person name="Kwan A."/>
            <person name="Lam B."/>
            <person name="Langin-Hooper S."/>
            <person name="Lee A."/>
            <person name="Lee J.M."/>
            <person name="Lenz C.A."/>
            <person name="Li J.H."/>
            <person name="Li Y.-P."/>
            <person name="Lin X."/>
            <person name="Liu S.X."/>
            <person name="Liu Z.A."/>
            <person name="Luros J.S."/>
            <person name="Maiti R."/>
            <person name="Marziali A."/>
            <person name="Militscher J."/>
            <person name="Miranda M."/>
            <person name="Nguyen M."/>
            <person name="Nierman W.C."/>
            <person name="Osborne B.I."/>
            <person name="Pai G."/>
            <person name="Peterson J."/>
            <person name="Pham P.K."/>
            <person name="Rizzo M."/>
            <person name="Rooney T."/>
            <person name="Rowley D."/>
            <person name="Sakano H."/>
            <person name="Salzberg S.L."/>
            <person name="Schwartz J.R."/>
            <person name="Shinn P."/>
            <person name="Southwick A.M."/>
            <person name="Sun H."/>
            <person name="Tallon L.J."/>
            <person name="Tambunga G."/>
            <person name="Toriumi M.J."/>
            <person name="Town C.D."/>
            <person name="Utterback T."/>
            <person name="Van Aken S."/>
            <person name="Vaysberg M."/>
            <person name="Vysotskaia V.S."/>
            <person name="Walker M."/>
            <person name="Wu D."/>
            <person name="Yu G."/>
            <person name="Fraser C.M."/>
            <person name="Venter J.C."/>
            <person name="Davis R.W."/>
        </authorList>
    </citation>
    <scope>NUCLEOTIDE SEQUENCE [LARGE SCALE GENOMIC DNA]</scope>
    <source>
        <strain>cv. Columbia</strain>
    </source>
</reference>
<reference key="3">
    <citation type="journal article" date="2017" name="Plant J.">
        <title>Araport11: a complete reannotation of the Arabidopsis thaliana reference genome.</title>
        <authorList>
            <person name="Cheng C.Y."/>
            <person name="Krishnakumar V."/>
            <person name="Chan A.P."/>
            <person name="Thibaud-Nissen F."/>
            <person name="Schobel S."/>
            <person name="Town C.D."/>
        </authorList>
    </citation>
    <scope>GENOME REANNOTATION</scope>
    <source>
        <strain>cv. Columbia</strain>
    </source>
</reference>
<reference key="4">
    <citation type="submission" date="2005-05" db="EMBL/GenBank/DDBJ databases">
        <authorList>
            <person name="Underwood B.A."/>
            <person name="Xiao Y.-L."/>
            <person name="Moskal W.A. Jr."/>
            <person name="Monaghan E.L."/>
            <person name="Wang W."/>
            <person name="Redman J.C."/>
            <person name="Wu H.C."/>
            <person name="Utterback T."/>
            <person name="Town C.D."/>
        </authorList>
    </citation>
    <scope>NUCLEOTIDE SEQUENCE [LARGE SCALE MRNA]</scope>
    <source>
        <strain>cv. Columbia</strain>
    </source>
</reference>
<reference key="5">
    <citation type="journal article" date="2002" name="Plant Physiol.">
        <title>Inositol phospholipid metabolism in Arabidopsis. Characterized and putative isoforms of inositol phospholipid kinase and phosphoinositide-specific phospholipase C.</title>
        <authorList>
            <person name="Mueller-Roeber B."/>
            <person name="Pical C."/>
        </authorList>
    </citation>
    <scope>GENE FAMILY</scope>
    <scope>NOMENCLATURE</scope>
</reference>
<gene>
    <name type="primary">PIP5K10</name>
    <name type="ordered locus">At1g01460</name>
    <name type="ORF">F22L4.2</name>
</gene>
<comment type="catalytic activity">
    <reaction>
        <text>a 1,2-diacyl-sn-glycero-3-phospho-(1D-myo-inositol 4-phosphate) + ATP = a 1,2-diacyl-sn-glycero-3-phospho-(1D-myo-inositol-4,5-bisphosphate) + ADP + H(+)</text>
        <dbReference type="Rhea" id="RHEA:14425"/>
        <dbReference type="ChEBI" id="CHEBI:15378"/>
        <dbReference type="ChEBI" id="CHEBI:30616"/>
        <dbReference type="ChEBI" id="CHEBI:58178"/>
        <dbReference type="ChEBI" id="CHEBI:58456"/>
        <dbReference type="ChEBI" id="CHEBI:456216"/>
        <dbReference type="EC" id="2.7.1.68"/>
    </reaction>
</comment>
<comment type="sequence caution" evidence="4">
    <conflict type="erroneous gene model prediction">
        <sequence resource="EMBL-CDS" id="AAF81306"/>
    </conflict>
</comment>
<accession>Q9LMN1</accession>
<accession>O23705</accession>
<protein>
    <recommendedName>
        <fullName>Phosphatidylinositol 4-phosphate 5-kinase 10</fullName>
        <shortName>AtPIP5K10</shortName>
        <ecNumber>2.7.1.68</ecNumber>
    </recommendedName>
    <alternativeName>
        <fullName>1-phosphatidylinositol 4-phosphate kinase 10</fullName>
    </alternativeName>
    <alternativeName>
        <fullName>Diphosphoinositide kinase 10</fullName>
    </alternativeName>
    <alternativeName>
        <fullName>PtdIns(4)P-5-kinase 10</fullName>
    </alternativeName>
</protein>
<proteinExistence type="evidence at transcript level"/>